<accession>A6TEQ3</accession>
<name>MDH_KLEP7</name>
<gene>
    <name type="primary">mdh</name>
    <name type="ordered locus">KPN78578_36130</name>
    <name type="ORF">KPN_03644</name>
</gene>
<protein>
    <recommendedName>
        <fullName>Malate dehydrogenase</fullName>
        <ecNumber>1.1.1.37</ecNumber>
    </recommendedName>
</protein>
<sequence>MKVAVLGAAGGIGQALALLLKTQLPSGSELSLYDIAPVTPGVAVDLSHIPTDVKIKGFSGEDATPALEGADVVLISAGVARKPGMDRSDLFNVNAGIVKNLVQQIAKTCPQACIGIITNPVNTTVAIAAEVLKKAGVYDKNKLFGVTTLDIIRSNTFVAELKGKSATEVEVPVIGGHSGVTILPLLSQIPGVSFSDQEIADLTKRIQNAGTEVVEAKAGGGSATLSMGQAAARFGLSLVRAMQGEKGVVECAYVEGDGHYARFFSQPLLLGKNGVEERQSIGKLSAFEQQALEGMLDTLKKDIALGEDFVNK</sequence>
<reference key="1">
    <citation type="submission" date="2006-09" db="EMBL/GenBank/DDBJ databases">
        <authorList>
            <consortium name="The Klebsiella pneumonia Genome Sequencing Project"/>
            <person name="McClelland M."/>
            <person name="Sanderson E.K."/>
            <person name="Spieth J."/>
            <person name="Clifton W.S."/>
            <person name="Latreille P."/>
            <person name="Sabo A."/>
            <person name="Pepin K."/>
            <person name="Bhonagiri V."/>
            <person name="Porwollik S."/>
            <person name="Ali J."/>
            <person name="Wilson R.K."/>
        </authorList>
    </citation>
    <scope>NUCLEOTIDE SEQUENCE [LARGE SCALE GENOMIC DNA]</scope>
    <source>
        <strain>ATCC 700721 / MGH 78578</strain>
    </source>
</reference>
<reference key="2">
    <citation type="journal article" date="2004" name="Antimicrob. Agents Chemother.">
        <title>Diversity and evolution of the class A chromosomal beta-lactamase gene in Klebsiella pneumoniae.</title>
        <authorList>
            <person name="Haeggman S."/>
            <person name="Loefdahl S."/>
            <person name="Paauw A."/>
            <person name="Verhoef J."/>
            <person name="Brisse S."/>
        </authorList>
    </citation>
    <scope>NUCLEOTIDE SEQUENCE [GENOMIC DNA] OF 31-144</scope>
</reference>
<comment type="function">
    <text evidence="1">Catalyzes the reversible oxidation of malate to oxaloacetate.</text>
</comment>
<comment type="catalytic activity">
    <reaction>
        <text>(S)-malate + NAD(+) = oxaloacetate + NADH + H(+)</text>
        <dbReference type="Rhea" id="RHEA:21432"/>
        <dbReference type="ChEBI" id="CHEBI:15378"/>
        <dbReference type="ChEBI" id="CHEBI:15589"/>
        <dbReference type="ChEBI" id="CHEBI:16452"/>
        <dbReference type="ChEBI" id="CHEBI:57540"/>
        <dbReference type="ChEBI" id="CHEBI:57945"/>
        <dbReference type="EC" id="1.1.1.37"/>
    </reaction>
</comment>
<comment type="subunit">
    <text evidence="1">Homodimer.</text>
</comment>
<comment type="similarity">
    <text evidence="2">Belongs to the LDH/MDH superfamily. MDH type 1 family.</text>
</comment>
<keyword id="KW-0520">NAD</keyword>
<keyword id="KW-0560">Oxidoreductase</keyword>
<keyword id="KW-0816">Tricarboxylic acid cycle</keyword>
<feature type="chain" id="PRO_0000313532" description="Malate dehydrogenase">
    <location>
        <begin position="1"/>
        <end position="312"/>
    </location>
</feature>
<feature type="active site" description="Proton acceptor" evidence="1">
    <location>
        <position position="177"/>
    </location>
</feature>
<feature type="binding site" evidence="1">
    <location>
        <begin position="7"/>
        <end position="13"/>
    </location>
    <ligand>
        <name>NAD(+)</name>
        <dbReference type="ChEBI" id="CHEBI:57540"/>
    </ligand>
</feature>
<feature type="binding site" evidence="1">
    <location>
        <position position="34"/>
    </location>
    <ligand>
        <name>NAD(+)</name>
        <dbReference type="ChEBI" id="CHEBI:57540"/>
    </ligand>
</feature>
<feature type="binding site" evidence="1">
    <location>
        <position position="81"/>
    </location>
    <ligand>
        <name>substrate</name>
    </ligand>
</feature>
<feature type="binding site" evidence="1">
    <location>
        <position position="87"/>
    </location>
    <ligand>
        <name>substrate</name>
    </ligand>
</feature>
<feature type="binding site" evidence="1">
    <location>
        <position position="94"/>
    </location>
    <ligand>
        <name>NAD(+)</name>
        <dbReference type="ChEBI" id="CHEBI:57540"/>
    </ligand>
</feature>
<feature type="binding site" evidence="1">
    <location>
        <begin position="117"/>
        <end position="119"/>
    </location>
    <ligand>
        <name>NAD(+)</name>
        <dbReference type="ChEBI" id="CHEBI:57540"/>
    </ligand>
</feature>
<feature type="binding site" evidence="1">
    <location>
        <position position="119"/>
    </location>
    <ligand>
        <name>substrate</name>
    </ligand>
</feature>
<feature type="binding site" evidence="1">
    <location>
        <position position="153"/>
    </location>
    <ligand>
        <name>substrate</name>
    </ligand>
</feature>
<feature type="binding site" evidence="1">
    <location>
        <position position="227"/>
    </location>
    <ligand>
        <name>NAD(+)</name>
        <dbReference type="ChEBI" id="CHEBI:57540"/>
    </ligand>
</feature>
<proteinExistence type="inferred from homology"/>
<organism>
    <name type="scientific">Klebsiella pneumoniae subsp. pneumoniae (strain ATCC 700721 / MGH 78578)</name>
    <dbReference type="NCBI Taxonomy" id="272620"/>
    <lineage>
        <taxon>Bacteria</taxon>
        <taxon>Pseudomonadati</taxon>
        <taxon>Pseudomonadota</taxon>
        <taxon>Gammaproteobacteria</taxon>
        <taxon>Enterobacterales</taxon>
        <taxon>Enterobacteriaceae</taxon>
        <taxon>Klebsiella/Raoultella group</taxon>
        <taxon>Klebsiella</taxon>
        <taxon>Klebsiella pneumoniae complex</taxon>
    </lineage>
</organism>
<dbReference type="EC" id="1.1.1.37"/>
<dbReference type="EMBL" id="CP000647">
    <property type="protein sequence ID" value="ABR79037.1"/>
    <property type="molecule type" value="Genomic_DNA"/>
</dbReference>
<dbReference type="EMBL" id="AJ635379">
    <property type="protein sequence ID" value="CAG25790.1"/>
    <property type="molecule type" value="Genomic_DNA"/>
</dbReference>
<dbReference type="RefSeq" id="WP_002918570.1">
    <property type="nucleotide sequence ID" value="NC_009648.1"/>
</dbReference>
<dbReference type="SMR" id="A6TEQ3"/>
<dbReference type="STRING" id="272620.KPN_03644"/>
<dbReference type="jPOST" id="A6TEQ3"/>
<dbReference type="PaxDb" id="272620-KPN_03644"/>
<dbReference type="EnsemblBacteria" id="ABR79037">
    <property type="protein sequence ID" value="ABR79037"/>
    <property type="gene ID" value="KPN_03644"/>
</dbReference>
<dbReference type="KEGG" id="kpn:KPN_03644"/>
<dbReference type="HOGENOM" id="CLU_047181_0_1_6"/>
<dbReference type="Proteomes" id="UP000000265">
    <property type="component" value="Chromosome"/>
</dbReference>
<dbReference type="GO" id="GO:0005737">
    <property type="term" value="C:cytoplasm"/>
    <property type="evidence" value="ECO:0007669"/>
    <property type="project" value="TreeGrafter"/>
</dbReference>
<dbReference type="GO" id="GO:0030060">
    <property type="term" value="F:L-malate dehydrogenase (NAD+) activity"/>
    <property type="evidence" value="ECO:0007669"/>
    <property type="project" value="UniProtKB-UniRule"/>
</dbReference>
<dbReference type="GO" id="GO:0006108">
    <property type="term" value="P:malate metabolic process"/>
    <property type="evidence" value="ECO:0007669"/>
    <property type="project" value="InterPro"/>
</dbReference>
<dbReference type="GO" id="GO:0006099">
    <property type="term" value="P:tricarboxylic acid cycle"/>
    <property type="evidence" value="ECO:0007669"/>
    <property type="project" value="UniProtKB-UniRule"/>
</dbReference>
<dbReference type="CDD" id="cd01337">
    <property type="entry name" value="MDH_glyoxysomal_mitochondrial"/>
    <property type="match status" value="1"/>
</dbReference>
<dbReference type="FunFam" id="3.40.50.720:FF:000017">
    <property type="entry name" value="Malate dehydrogenase"/>
    <property type="match status" value="1"/>
</dbReference>
<dbReference type="FunFam" id="3.90.110.10:FF:000001">
    <property type="entry name" value="Malate dehydrogenase"/>
    <property type="match status" value="1"/>
</dbReference>
<dbReference type="Gene3D" id="3.90.110.10">
    <property type="entry name" value="Lactate dehydrogenase/glycoside hydrolase, family 4, C-terminal"/>
    <property type="match status" value="1"/>
</dbReference>
<dbReference type="Gene3D" id="3.40.50.720">
    <property type="entry name" value="NAD(P)-binding Rossmann-like Domain"/>
    <property type="match status" value="1"/>
</dbReference>
<dbReference type="HAMAP" id="MF_01516">
    <property type="entry name" value="Malate_dehydrog_1"/>
    <property type="match status" value="1"/>
</dbReference>
<dbReference type="InterPro" id="IPR001557">
    <property type="entry name" value="L-lactate/malate_DH"/>
</dbReference>
<dbReference type="InterPro" id="IPR022383">
    <property type="entry name" value="Lactate/malate_DH_C"/>
</dbReference>
<dbReference type="InterPro" id="IPR001236">
    <property type="entry name" value="Lactate/malate_DH_N"/>
</dbReference>
<dbReference type="InterPro" id="IPR015955">
    <property type="entry name" value="Lactate_DH/Glyco_Ohase_4_C"/>
</dbReference>
<dbReference type="InterPro" id="IPR001252">
    <property type="entry name" value="Malate_DH_AS"/>
</dbReference>
<dbReference type="InterPro" id="IPR010097">
    <property type="entry name" value="Malate_DH_type1"/>
</dbReference>
<dbReference type="InterPro" id="IPR023958">
    <property type="entry name" value="Malate_DH_type1_bac"/>
</dbReference>
<dbReference type="InterPro" id="IPR036291">
    <property type="entry name" value="NAD(P)-bd_dom_sf"/>
</dbReference>
<dbReference type="NCBIfam" id="TIGR01772">
    <property type="entry name" value="MDH_euk_gproteo"/>
    <property type="match status" value="1"/>
</dbReference>
<dbReference type="PANTHER" id="PTHR11540">
    <property type="entry name" value="MALATE AND LACTATE DEHYDROGENASE"/>
    <property type="match status" value="1"/>
</dbReference>
<dbReference type="PANTHER" id="PTHR11540:SF16">
    <property type="entry name" value="MALATE DEHYDROGENASE, MITOCHONDRIAL"/>
    <property type="match status" value="1"/>
</dbReference>
<dbReference type="Pfam" id="PF02866">
    <property type="entry name" value="Ldh_1_C"/>
    <property type="match status" value="1"/>
</dbReference>
<dbReference type="Pfam" id="PF00056">
    <property type="entry name" value="Ldh_1_N"/>
    <property type="match status" value="1"/>
</dbReference>
<dbReference type="PIRSF" id="PIRSF000102">
    <property type="entry name" value="Lac_mal_DH"/>
    <property type="match status" value="1"/>
</dbReference>
<dbReference type="SUPFAM" id="SSF56327">
    <property type="entry name" value="LDH C-terminal domain-like"/>
    <property type="match status" value="1"/>
</dbReference>
<dbReference type="SUPFAM" id="SSF51735">
    <property type="entry name" value="NAD(P)-binding Rossmann-fold domains"/>
    <property type="match status" value="1"/>
</dbReference>
<dbReference type="PROSITE" id="PS00068">
    <property type="entry name" value="MDH"/>
    <property type="match status" value="1"/>
</dbReference>
<evidence type="ECO:0000250" key="1"/>
<evidence type="ECO:0000305" key="2"/>